<comment type="function">
    <text evidence="1">Small subunit of the glutamine-dependent carbamoyl phosphate synthetase (CPSase). CPSase catalyzes the formation of carbamoyl phosphate from the ammonia moiety of glutamine, carbonate, and phosphate donated by ATP, constituting the first step of 2 biosynthetic pathways, one leading to arginine and/or urea and the other to pyrimidine nucleotides. The small subunit (glutamine amidotransferase) binds and cleaves glutamine to supply the large subunit with the substrate ammonia.</text>
</comment>
<comment type="catalytic activity">
    <reaction evidence="1">
        <text>hydrogencarbonate + L-glutamine + 2 ATP + H2O = carbamoyl phosphate + L-glutamate + 2 ADP + phosphate + 2 H(+)</text>
        <dbReference type="Rhea" id="RHEA:18633"/>
        <dbReference type="ChEBI" id="CHEBI:15377"/>
        <dbReference type="ChEBI" id="CHEBI:15378"/>
        <dbReference type="ChEBI" id="CHEBI:17544"/>
        <dbReference type="ChEBI" id="CHEBI:29985"/>
        <dbReference type="ChEBI" id="CHEBI:30616"/>
        <dbReference type="ChEBI" id="CHEBI:43474"/>
        <dbReference type="ChEBI" id="CHEBI:58228"/>
        <dbReference type="ChEBI" id="CHEBI:58359"/>
        <dbReference type="ChEBI" id="CHEBI:456216"/>
        <dbReference type="EC" id="6.3.5.5"/>
    </reaction>
</comment>
<comment type="catalytic activity">
    <molecule>Carbamoyl phosphate synthase small chain</molecule>
    <reaction evidence="1">
        <text>L-glutamine + H2O = L-glutamate + NH4(+)</text>
        <dbReference type="Rhea" id="RHEA:15889"/>
        <dbReference type="ChEBI" id="CHEBI:15377"/>
        <dbReference type="ChEBI" id="CHEBI:28938"/>
        <dbReference type="ChEBI" id="CHEBI:29985"/>
        <dbReference type="ChEBI" id="CHEBI:58359"/>
    </reaction>
</comment>
<comment type="pathway">
    <text evidence="1">Amino-acid biosynthesis; L-arginine biosynthesis; carbamoyl phosphate from bicarbonate: step 1/1.</text>
</comment>
<comment type="pathway">
    <text evidence="1">Pyrimidine metabolism; UMP biosynthesis via de novo pathway; (S)-dihydroorotate from bicarbonate: step 1/3.</text>
</comment>
<comment type="subunit">
    <text evidence="1">Composed of two chains; the small (or glutamine) chain promotes the hydrolysis of glutamine to ammonia, which is used by the large (or ammonia) chain to synthesize carbamoyl phosphate. Tetramer of heterodimers (alpha,beta)4.</text>
</comment>
<comment type="similarity">
    <text evidence="1">Belongs to the CarA family.</text>
</comment>
<accession>Q71YI0</accession>
<protein>
    <recommendedName>
        <fullName evidence="1">Carbamoyl phosphate synthase small chain</fullName>
        <ecNumber evidence="1">6.3.5.5</ecNumber>
    </recommendedName>
    <alternativeName>
        <fullName evidence="1">Carbamoyl phosphate synthetase glutamine chain</fullName>
    </alternativeName>
</protein>
<feature type="chain" id="PRO_0000112291" description="Carbamoyl phosphate synthase small chain">
    <location>
        <begin position="1"/>
        <end position="363"/>
    </location>
</feature>
<feature type="domain" description="Glutamine amidotransferase type-1" evidence="1">
    <location>
        <begin position="172"/>
        <end position="359"/>
    </location>
</feature>
<feature type="region of interest" description="CPSase" evidence="1">
    <location>
        <begin position="1"/>
        <end position="172"/>
    </location>
</feature>
<feature type="active site" description="Nucleophile" evidence="1">
    <location>
        <position position="247"/>
    </location>
</feature>
<feature type="active site" evidence="1">
    <location>
        <position position="332"/>
    </location>
</feature>
<feature type="active site" evidence="1">
    <location>
        <position position="334"/>
    </location>
</feature>
<feature type="binding site" evidence="1">
    <location>
        <position position="46"/>
    </location>
    <ligand>
        <name>L-glutamine</name>
        <dbReference type="ChEBI" id="CHEBI:58359"/>
    </ligand>
</feature>
<feature type="binding site" evidence="1">
    <location>
        <position position="220"/>
    </location>
    <ligand>
        <name>L-glutamine</name>
        <dbReference type="ChEBI" id="CHEBI:58359"/>
    </ligand>
</feature>
<feature type="binding site" evidence="1">
    <location>
        <position position="222"/>
    </location>
    <ligand>
        <name>L-glutamine</name>
        <dbReference type="ChEBI" id="CHEBI:58359"/>
    </ligand>
</feature>
<feature type="binding site" evidence="1">
    <location>
        <position position="248"/>
    </location>
    <ligand>
        <name>L-glutamine</name>
        <dbReference type="ChEBI" id="CHEBI:58359"/>
    </ligand>
</feature>
<feature type="binding site" evidence="1">
    <location>
        <position position="251"/>
    </location>
    <ligand>
        <name>L-glutamine</name>
        <dbReference type="ChEBI" id="CHEBI:58359"/>
    </ligand>
</feature>
<feature type="binding site" evidence="1">
    <location>
        <position position="289"/>
    </location>
    <ligand>
        <name>L-glutamine</name>
        <dbReference type="ChEBI" id="CHEBI:58359"/>
    </ligand>
</feature>
<feature type="binding site" evidence="1">
    <location>
        <position position="291"/>
    </location>
    <ligand>
        <name>L-glutamine</name>
        <dbReference type="ChEBI" id="CHEBI:58359"/>
    </ligand>
</feature>
<feature type="binding site" evidence="1">
    <location>
        <position position="292"/>
    </location>
    <ligand>
        <name>L-glutamine</name>
        <dbReference type="ChEBI" id="CHEBI:58359"/>
    </ligand>
</feature>
<keyword id="KW-0028">Amino-acid biosynthesis</keyword>
<keyword id="KW-0055">Arginine biosynthesis</keyword>
<keyword id="KW-0067">ATP-binding</keyword>
<keyword id="KW-0315">Glutamine amidotransferase</keyword>
<keyword id="KW-0436">Ligase</keyword>
<keyword id="KW-0547">Nucleotide-binding</keyword>
<keyword id="KW-0665">Pyrimidine biosynthesis</keyword>
<name>CARA_LISMF</name>
<organism>
    <name type="scientific">Listeria monocytogenes serotype 4b (strain F2365)</name>
    <dbReference type="NCBI Taxonomy" id="265669"/>
    <lineage>
        <taxon>Bacteria</taxon>
        <taxon>Bacillati</taxon>
        <taxon>Bacillota</taxon>
        <taxon>Bacilli</taxon>
        <taxon>Bacillales</taxon>
        <taxon>Listeriaceae</taxon>
        <taxon>Listeria</taxon>
    </lineage>
</organism>
<proteinExistence type="inferred from homology"/>
<dbReference type="EC" id="6.3.5.5" evidence="1"/>
<dbReference type="EMBL" id="AE017262">
    <property type="protein sequence ID" value="AAT04634.1"/>
    <property type="molecule type" value="Genomic_DNA"/>
</dbReference>
<dbReference type="RefSeq" id="WP_003728291.1">
    <property type="nucleotide sequence ID" value="NC_002973.6"/>
</dbReference>
<dbReference type="SMR" id="Q71YI0"/>
<dbReference type="KEGG" id="lmf:LMOf2365_1864"/>
<dbReference type="HOGENOM" id="CLU_035901_2_1_9"/>
<dbReference type="UniPathway" id="UPA00068">
    <property type="reaction ID" value="UER00171"/>
</dbReference>
<dbReference type="UniPathway" id="UPA00070">
    <property type="reaction ID" value="UER00115"/>
</dbReference>
<dbReference type="GO" id="GO:0005524">
    <property type="term" value="F:ATP binding"/>
    <property type="evidence" value="ECO:0007669"/>
    <property type="project" value="UniProtKB-UniRule"/>
</dbReference>
<dbReference type="GO" id="GO:0004088">
    <property type="term" value="F:carbamoyl-phosphate synthase (glutamine-hydrolyzing) activity"/>
    <property type="evidence" value="ECO:0007669"/>
    <property type="project" value="UniProtKB-UniRule"/>
</dbReference>
<dbReference type="GO" id="GO:0004359">
    <property type="term" value="F:glutaminase activity"/>
    <property type="evidence" value="ECO:0007669"/>
    <property type="project" value="RHEA"/>
</dbReference>
<dbReference type="GO" id="GO:0006207">
    <property type="term" value="P:'de novo' pyrimidine nucleobase biosynthetic process"/>
    <property type="evidence" value="ECO:0007669"/>
    <property type="project" value="InterPro"/>
</dbReference>
<dbReference type="GO" id="GO:0044205">
    <property type="term" value="P:'de novo' UMP biosynthetic process"/>
    <property type="evidence" value="ECO:0007669"/>
    <property type="project" value="UniProtKB-UniRule"/>
</dbReference>
<dbReference type="GO" id="GO:0006541">
    <property type="term" value="P:glutamine metabolic process"/>
    <property type="evidence" value="ECO:0007669"/>
    <property type="project" value="InterPro"/>
</dbReference>
<dbReference type="GO" id="GO:0006526">
    <property type="term" value="P:L-arginine biosynthetic process"/>
    <property type="evidence" value="ECO:0007669"/>
    <property type="project" value="UniProtKB-UniRule"/>
</dbReference>
<dbReference type="CDD" id="cd01744">
    <property type="entry name" value="GATase1_CPSase"/>
    <property type="match status" value="1"/>
</dbReference>
<dbReference type="FunFam" id="3.40.50.880:FF:000029">
    <property type="entry name" value="Carbamoyl-phosphate synthase small chain"/>
    <property type="match status" value="1"/>
</dbReference>
<dbReference type="FunFam" id="3.50.30.20:FF:000001">
    <property type="entry name" value="Carbamoyl-phosphate synthase small chain"/>
    <property type="match status" value="1"/>
</dbReference>
<dbReference type="Gene3D" id="3.40.50.880">
    <property type="match status" value="1"/>
</dbReference>
<dbReference type="Gene3D" id="3.50.30.20">
    <property type="entry name" value="Carbamoyl-phosphate synthase small subunit, N-terminal domain"/>
    <property type="match status" value="1"/>
</dbReference>
<dbReference type="HAMAP" id="MF_01209">
    <property type="entry name" value="CPSase_S_chain"/>
    <property type="match status" value="1"/>
</dbReference>
<dbReference type="InterPro" id="IPR050472">
    <property type="entry name" value="Anth_synth/Amidotransfase"/>
</dbReference>
<dbReference type="InterPro" id="IPR006274">
    <property type="entry name" value="CarbamoylP_synth_ssu"/>
</dbReference>
<dbReference type="InterPro" id="IPR002474">
    <property type="entry name" value="CarbamoylP_synth_ssu_N"/>
</dbReference>
<dbReference type="InterPro" id="IPR036480">
    <property type="entry name" value="CarbP_synth_ssu_N_sf"/>
</dbReference>
<dbReference type="InterPro" id="IPR029062">
    <property type="entry name" value="Class_I_gatase-like"/>
</dbReference>
<dbReference type="InterPro" id="IPR035686">
    <property type="entry name" value="CPSase_GATase1"/>
</dbReference>
<dbReference type="InterPro" id="IPR017926">
    <property type="entry name" value="GATASE"/>
</dbReference>
<dbReference type="NCBIfam" id="TIGR01368">
    <property type="entry name" value="CPSaseIIsmall"/>
    <property type="match status" value="1"/>
</dbReference>
<dbReference type="NCBIfam" id="NF009475">
    <property type="entry name" value="PRK12838.1"/>
    <property type="match status" value="1"/>
</dbReference>
<dbReference type="PANTHER" id="PTHR43418:SF7">
    <property type="entry name" value="CARBAMOYL-PHOSPHATE SYNTHASE SMALL CHAIN"/>
    <property type="match status" value="1"/>
</dbReference>
<dbReference type="PANTHER" id="PTHR43418">
    <property type="entry name" value="MULTIFUNCTIONAL TRYPTOPHAN BIOSYNTHESIS PROTEIN-RELATED"/>
    <property type="match status" value="1"/>
</dbReference>
<dbReference type="Pfam" id="PF00988">
    <property type="entry name" value="CPSase_sm_chain"/>
    <property type="match status" value="1"/>
</dbReference>
<dbReference type="Pfam" id="PF00117">
    <property type="entry name" value="GATase"/>
    <property type="match status" value="1"/>
</dbReference>
<dbReference type="PRINTS" id="PR00097">
    <property type="entry name" value="ANTSNTHASEII"/>
</dbReference>
<dbReference type="PRINTS" id="PR00099">
    <property type="entry name" value="CPSGATASE"/>
</dbReference>
<dbReference type="PRINTS" id="PR00096">
    <property type="entry name" value="GATASE"/>
</dbReference>
<dbReference type="SMART" id="SM01097">
    <property type="entry name" value="CPSase_sm_chain"/>
    <property type="match status" value="1"/>
</dbReference>
<dbReference type="SUPFAM" id="SSF52021">
    <property type="entry name" value="Carbamoyl phosphate synthetase, small subunit N-terminal domain"/>
    <property type="match status" value="1"/>
</dbReference>
<dbReference type="SUPFAM" id="SSF52317">
    <property type="entry name" value="Class I glutamine amidotransferase-like"/>
    <property type="match status" value="1"/>
</dbReference>
<dbReference type="PROSITE" id="PS51273">
    <property type="entry name" value="GATASE_TYPE_1"/>
    <property type="match status" value="1"/>
</dbReference>
<sequence length="363" mass="40095">MTKRILMLEDGNYFIGDAIGSEKETIGEVVFNTGMTGYQETITDPSYYGQIITFTYPLVGNYGVNRDDFESINPAVKGVVVREAAEFPSNWRNQITLDEFLKEKGIPGIAGIDTRKLTKLIRKEGTLKGILAAETANKEELLHHLRSVRLPVDQVHEVSSAKAFASPGDGKRVVLVDYGVKSSILRELNKRNCYVTVVPYNTTAEEILAMHPDGVMLSNGPGDPKDVPEALEMIRGIQGKLPLFGICLGHQLFALANGADTFKLKFGHRGANHPVKELATGRVDFTAQNHGYAVEKDSLIGTDLKVTHIELNDETVEGLAHKEYPAYTVQYHPEANPGPSDVNYLFDEFMEMMNGKEEGELHA</sequence>
<reference key="1">
    <citation type="journal article" date="2004" name="Nucleic Acids Res.">
        <title>Whole genome comparisons of serotype 4b and 1/2a strains of the food-borne pathogen Listeria monocytogenes reveal new insights into the core genome components of this species.</title>
        <authorList>
            <person name="Nelson K.E."/>
            <person name="Fouts D.E."/>
            <person name="Mongodin E.F."/>
            <person name="Ravel J."/>
            <person name="DeBoy R.T."/>
            <person name="Kolonay J.F."/>
            <person name="Rasko D.A."/>
            <person name="Angiuoli S.V."/>
            <person name="Gill S.R."/>
            <person name="Paulsen I.T."/>
            <person name="Peterson J.D."/>
            <person name="White O."/>
            <person name="Nelson W.C."/>
            <person name="Nierman W.C."/>
            <person name="Beanan M.J."/>
            <person name="Brinkac L.M."/>
            <person name="Daugherty S.C."/>
            <person name="Dodson R.J."/>
            <person name="Durkin A.S."/>
            <person name="Madupu R."/>
            <person name="Haft D.H."/>
            <person name="Selengut J."/>
            <person name="Van Aken S.E."/>
            <person name="Khouri H.M."/>
            <person name="Fedorova N."/>
            <person name="Forberger H.A."/>
            <person name="Tran B."/>
            <person name="Kathariou S."/>
            <person name="Wonderling L.D."/>
            <person name="Uhlich G.A."/>
            <person name="Bayles D.O."/>
            <person name="Luchansky J.B."/>
            <person name="Fraser C.M."/>
        </authorList>
    </citation>
    <scope>NUCLEOTIDE SEQUENCE [LARGE SCALE GENOMIC DNA]</scope>
    <source>
        <strain>F2365</strain>
    </source>
</reference>
<gene>
    <name evidence="1" type="primary">carA</name>
    <name type="ordered locus">LMOf2365_1864</name>
</gene>
<evidence type="ECO:0000255" key="1">
    <source>
        <dbReference type="HAMAP-Rule" id="MF_01209"/>
    </source>
</evidence>